<dbReference type="EMBL" id="CP001321">
    <property type="protein sequence ID" value="ACL33505.1"/>
    <property type="molecule type" value="Genomic_DNA"/>
</dbReference>
<dbReference type="RefSeq" id="WP_005713169.1">
    <property type="nucleotide sequence ID" value="NC_011852.1"/>
</dbReference>
<dbReference type="SMR" id="B8F853"/>
<dbReference type="STRING" id="557723.HAPS_2045"/>
<dbReference type="GeneID" id="66619328"/>
<dbReference type="KEGG" id="hap:HAPS_2045"/>
<dbReference type="HOGENOM" id="CLU_069356_5_0_6"/>
<dbReference type="Proteomes" id="UP000006743">
    <property type="component" value="Chromosome"/>
</dbReference>
<dbReference type="GO" id="GO:0043590">
    <property type="term" value="C:bacterial nucleoid"/>
    <property type="evidence" value="ECO:0007669"/>
    <property type="project" value="UniProtKB-UniRule"/>
</dbReference>
<dbReference type="GO" id="GO:0005737">
    <property type="term" value="C:cytoplasm"/>
    <property type="evidence" value="ECO:0007669"/>
    <property type="project" value="UniProtKB-UniRule"/>
</dbReference>
<dbReference type="GO" id="GO:0043565">
    <property type="term" value="F:sequence-specific DNA binding"/>
    <property type="evidence" value="ECO:0007669"/>
    <property type="project" value="UniProtKB-UniRule"/>
</dbReference>
<dbReference type="GO" id="GO:0051301">
    <property type="term" value="P:cell division"/>
    <property type="evidence" value="ECO:0007669"/>
    <property type="project" value="UniProtKB-KW"/>
</dbReference>
<dbReference type="GO" id="GO:0010974">
    <property type="term" value="P:negative regulation of division septum assembly"/>
    <property type="evidence" value="ECO:0007669"/>
    <property type="project" value="InterPro"/>
</dbReference>
<dbReference type="Gene3D" id="1.10.357.10">
    <property type="entry name" value="Tetracycline Repressor, domain 2"/>
    <property type="match status" value="1"/>
</dbReference>
<dbReference type="HAMAP" id="MF_01839">
    <property type="entry name" value="NO_factor_SlmA"/>
    <property type="match status" value="1"/>
</dbReference>
<dbReference type="InterPro" id="IPR023772">
    <property type="entry name" value="DNA-bd_HTH_TetR-type_CS"/>
</dbReference>
<dbReference type="InterPro" id="IPR009057">
    <property type="entry name" value="Homeodomain-like_sf"/>
</dbReference>
<dbReference type="InterPro" id="IPR050624">
    <property type="entry name" value="HTH-type_Tx_Regulator"/>
</dbReference>
<dbReference type="InterPro" id="IPR001647">
    <property type="entry name" value="HTH_TetR"/>
</dbReference>
<dbReference type="InterPro" id="IPR023769">
    <property type="entry name" value="NO_SlmA"/>
</dbReference>
<dbReference type="InterPro" id="IPR054580">
    <property type="entry name" value="SlmA-like_C"/>
</dbReference>
<dbReference type="NCBIfam" id="NF007015">
    <property type="entry name" value="PRK09480.1"/>
    <property type="match status" value="1"/>
</dbReference>
<dbReference type="PANTHER" id="PTHR43479">
    <property type="entry name" value="ACREF/ENVCD OPERON REPRESSOR-RELATED"/>
    <property type="match status" value="1"/>
</dbReference>
<dbReference type="PANTHER" id="PTHR43479:SF11">
    <property type="entry name" value="ACREF_ENVCD OPERON REPRESSOR-RELATED"/>
    <property type="match status" value="1"/>
</dbReference>
<dbReference type="Pfam" id="PF22276">
    <property type="entry name" value="SlmA-like_C"/>
    <property type="match status" value="1"/>
</dbReference>
<dbReference type="Pfam" id="PF00440">
    <property type="entry name" value="TetR_N"/>
    <property type="match status" value="1"/>
</dbReference>
<dbReference type="SUPFAM" id="SSF46689">
    <property type="entry name" value="Homeodomain-like"/>
    <property type="match status" value="1"/>
</dbReference>
<dbReference type="PROSITE" id="PS01081">
    <property type="entry name" value="HTH_TETR_1"/>
    <property type="match status" value="1"/>
</dbReference>
<dbReference type="PROSITE" id="PS50977">
    <property type="entry name" value="HTH_TETR_2"/>
    <property type="match status" value="1"/>
</dbReference>
<protein>
    <recommendedName>
        <fullName evidence="1">Nucleoid occlusion factor SlmA</fullName>
    </recommendedName>
</protein>
<reference key="1">
    <citation type="journal article" date="2009" name="J. Bacteriol.">
        <title>Complete genome sequence of Haemophilus parasuis SH0165.</title>
        <authorList>
            <person name="Yue M."/>
            <person name="Yang F."/>
            <person name="Yang J."/>
            <person name="Bei W."/>
            <person name="Cai X."/>
            <person name="Chen L."/>
            <person name="Dong J."/>
            <person name="Zhou R."/>
            <person name="Jin M."/>
            <person name="Jin Q."/>
            <person name="Chen H."/>
        </authorList>
    </citation>
    <scope>NUCLEOTIDE SEQUENCE [LARGE SCALE GENOMIC DNA]</scope>
    <source>
        <strain>SH0165</strain>
    </source>
</reference>
<evidence type="ECO:0000255" key="1">
    <source>
        <dbReference type="HAMAP-Rule" id="MF_01839"/>
    </source>
</evidence>
<feature type="chain" id="PRO_0000413759" description="Nucleoid occlusion factor SlmA">
    <location>
        <begin position="1"/>
        <end position="201"/>
    </location>
</feature>
<feature type="domain" description="HTH tetR-type" evidence="1">
    <location>
        <begin position="14"/>
        <end position="75"/>
    </location>
</feature>
<feature type="DNA-binding region" description="H-T-H motif" evidence="1">
    <location>
        <begin position="38"/>
        <end position="57"/>
    </location>
</feature>
<sequence length="201" mass="23368">MTEPVIKMPKKSVKERQQQVLEVLIGLLNSEEGMQRVTTERLSKAVGVSEGALYRYFPSKTKMFEALIERIEMTLTSYINASKRQENTELAVKAILQTILEFAQKNPGVTRILTGHALMFEDELLKARVAKFFEGLELQFMNLLQMRKLREGRAFADERALAGYLVNFCEGQFLRLVRSNFGFNQHQHFEKQWQLIKPLFY</sequence>
<gene>
    <name evidence="1" type="primary">slmA</name>
    <name type="ordered locus">HAPS_2045</name>
</gene>
<name>SLMA_GLAP5</name>
<proteinExistence type="inferred from homology"/>
<accession>B8F853</accession>
<keyword id="KW-0131">Cell cycle</keyword>
<keyword id="KW-0132">Cell division</keyword>
<keyword id="KW-0963">Cytoplasm</keyword>
<keyword id="KW-0238">DNA-binding</keyword>
<keyword id="KW-1185">Reference proteome</keyword>
<organism>
    <name type="scientific">Glaesserella parasuis serovar 5 (strain SH0165)</name>
    <name type="common">Haemophilus parasuis</name>
    <dbReference type="NCBI Taxonomy" id="557723"/>
    <lineage>
        <taxon>Bacteria</taxon>
        <taxon>Pseudomonadati</taxon>
        <taxon>Pseudomonadota</taxon>
        <taxon>Gammaproteobacteria</taxon>
        <taxon>Pasteurellales</taxon>
        <taxon>Pasteurellaceae</taxon>
        <taxon>Glaesserella</taxon>
    </lineage>
</organism>
<comment type="function">
    <text evidence="1">Required for nucleoid occlusion (NO) phenomenon, which prevents Z-ring formation and cell division over the nucleoid. Acts as a DNA-associated cell division inhibitor that binds simultaneously chromosomal DNA and FtsZ, and disrupts the assembly of FtsZ polymers. SlmA-DNA-binding sequences (SBS) are dispersed on non-Ter regions of the chromosome, preventing FtsZ polymerization at these regions.</text>
</comment>
<comment type="subunit">
    <text evidence="1">Homodimer. Interacts with FtsZ.</text>
</comment>
<comment type="subcellular location">
    <subcellularLocation>
        <location evidence="1">Cytoplasm</location>
        <location evidence="1">Nucleoid</location>
    </subcellularLocation>
</comment>
<comment type="similarity">
    <text evidence="1">Belongs to the nucleoid occlusion factor SlmA family.</text>
</comment>